<proteinExistence type="inferred from homology"/>
<reference key="1">
    <citation type="journal article" date="2009" name="Genome Biol.">
        <title>A whole-genome assembly of the domestic cow, Bos taurus.</title>
        <authorList>
            <person name="Zimin A.V."/>
            <person name="Delcher A.L."/>
            <person name="Florea L."/>
            <person name="Kelley D.R."/>
            <person name="Schatz M.C."/>
            <person name="Puiu D."/>
            <person name="Hanrahan F."/>
            <person name="Pertea G."/>
            <person name="Van Tassell C.P."/>
            <person name="Sonstegard T.S."/>
            <person name="Marcais G."/>
            <person name="Roberts M."/>
            <person name="Subramanian P."/>
            <person name="Yorke J.A."/>
            <person name="Salzberg S.L."/>
        </authorList>
    </citation>
    <scope>NUCLEOTIDE SEQUENCE [LARGE SCALE GENOMIC DNA]</scope>
    <source>
        <strain>Hereford</strain>
    </source>
</reference>
<organism>
    <name type="scientific">Bos taurus</name>
    <name type="common">Bovine</name>
    <dbReference type="NCBI Taxonomy" id="9913"/>
    <lineage>
        <taxon>Eukaryota</taxon>
        <taxon>Metazoa</taxon>
        <taxon>Chordata</taxon>
        <taxon>Craniata</taxon>
        <taxon>Vertebrata</taxon>
        <taxon>Euteleostomi</taxon>
        <taxon>Mammalia</taxon>
        <taxon>Eutheria</taxon>
        <taxon>Laurasiatheria</taxon>
        <taxon>Artiodactyla</taxon>
        <taxon>Ruminantia</taxon>
        <taxon>Pecora</taxon>
        <taxon>Bovidae</taxon>
        <taxon>Bovinae</taxon>
        <taxon>Bos</taxon>
    </lineage>
</organism>
<gene>
    <name evidence="2" type="primary">SCNN1G</name>
</gene>
<sequence>MAPGEKIKAKIKKNLPVTGPQAPNIKELMQWYCLNTNTHGCRRIVVSRGRLRRLLWILFTLTAVALIFWQCALLISSFYTVSVSIKVHFQKLDFPAVTICNINPYKYSAVRHLLADLEQETRAALKTLYGFSEITSRKRREAQSWSSVRKGTDPKFLNLAPLMAFEKGDTGKARDFFTGRKRKVNARIIHKASDVMHIHNSKEVVGFQLCSNDTSDCAVYTFSSGVNAIQEWYKLHYMNIMAQVSQEKKINMSYSADELLVTCFFDGVSCDARNFTLFHHPMYGNCYTFNNRQNETILSTSMGGSEFGLQVILYINEEEYNPFLVSSTGAKVIIHRQDEYPFVEDVGTEIETAMATSIGMHLTESFKLSDPYSQCTEDWSDVQITNIYNATYSLQICLHSCFQAKMVENCGCAQYSQPLPRGADYCNYQQHPNWMYCYYQLHQAFVREELGCQSVCKEACSFKEWTLTTSLAQWPSEVSEKWLLSILTWDQSQQIKKKLNKTDLAKLLIFYKDLNQRSIMENPANSIEQLLSNIGGQLGLWMSCSVVCVIEIIEVFFIDSLSIIARHQWHKAKGWWARRRAPACPEAPRAPQGRDNPSLDIDDDLPTFTSALSLPPAPGSQVPGTPPPRYNTLRLERAFSSQLTDTQTTFPH</sequence>
<keyword id="KW-1003">Cell membrane</keyword>
<keyword id="KW-1015">Disulfide bond</keyword>
<keyword id="KW-0325">Glycoprotein</keyword>
<keyword id="KW-0407">Ion channel</keyword>
<keyword id="KW-0406">Ion transport</keyword>
<keyword id="KW-0472">Membrane</keyword>
<keyword id="KW-0597">Phosphoprotein</keyword>
<keyword id="KW-1185">Reference proteome</keyword>
<keyword id="KW-0915">Sodium</keyword>
<keyword id="KW-0894">Sodium channel</keyword>
<keyword id="KW-0739">Sodium transport</keyword>
<keyword id="KW-0812">Transmembrane</keyword>
<keyword id="KW-1133">Transmembrane helix</keyword>
<keyword id="KW-0813">Transport</keyword>
<keyword id="KW-0832">Ubl conjugation</keyword>
<feature type="chain" id="PRO_0000432863" description="Epithelial sodium channel subunit gamma">
    <location>
        <begin position="1"/>
        <end position="652"/>
    </location>
</feature>
<feature type="topological domain" description="Cytoplasmic" evidence="2">
    <location>
        <begin position="1"/>
        <end position="54"/>
    </location>
</feature>
<feature type="transmembrane region" description="Helical; Name=1" evidence="4">
    <location>
        <begin position="55"/>
        <end position="75"/>
    </location>
</feature>
<feature type="topological domain" description="Extracellular" evidence="2">
    <location>
        <begin position="76"/>
        <end position="537"/>
    </location>
</feature>
<feature type="transmembrane region" description="Helical; Name=2" evidence="4">
    <location>
        <begin position="538"/>
        <end position="558"/>
    </location>
</feature>
<feature type="topological domain" description="Cytoplasmic" evidence="2">
    <location>
        <begin position="559"/>
        <end position="652"/>
    </location>
</feature>
<feature type="region of interest" description="Gating release of inhibition by proteolysis (GRIP); protease-sensitive region that is responsible for the proteolytic activation of the channel" evidence="2">
    <location>
        <begin position="137"/>
        <end position="224"/>
    </location>
</feature>
<feature type="region of interest" description="Disordered" evidence="5">
    <location>
        <begin position="610"/>
        <end position="631"/>
    </location>
</feature>
<feature type="short sequence motif" description="PY motif; recruits WW domain-containing proteins and is thereby required for ubiquitination and inhibition of the channel by NEDD4 and NEDD4L" evidence="2">
    <location>
        <begin position="626"/>
        <end position="630"/>
    </location>
</feature>
<feature type="site" description="Cleavage; by furin" evidence="3">
    <location>
        <begin position="140"/>
        <end position="141"/>
    </location>
</feature>
<feature type="site" description="Cleavage; by PRSS8" evidence="3">
    <location>
        <begin position="183"/>
        <end position="184"/>
    </location>
</feature>
<feature type="glycosylation site" description="N-linked (GlcNAc...) asparagine" evidence="4">
    <location>
        <position position="212"/>
    </location>
</feature>
<feature type="glycosylation site" description="N-linked (GlcNAc...) asparagine" evidence="4">
    <location>
        <position position="500"/>
    </location>
</feature>
<feature type="disulfide bond" evidence="2">
    <location>
        <begin position="100"/>
        <end position="286"/>
    </location>
</feature>
<feature type="disulfide bond" evidence="2">
    <location>
        <begin position="210"/>
        <end position="217"/>
    </location>
</feature>
<feature type="disulfide bond" evidence="2">
    <location>
        <begin position="263"/>
        <end position="270"/>
    </location>
</feature>
<feature type="disulfide bond" evidence="2">
    <location>
        <begin position="375"/>
        <end position="460"/>
    </location>
</feature>
<feature type="disulfide bond" evidence="2">
    <location>
        <begin position="397"/>
        <end position="456"/>
    </location>
</feature>
<feature type="disulfide bond" evidence="2">
    <location>
        <begin position="401"/>
        <end position="452"/>
    </location>
</feature>
<feature type="disulfide bond" evidence="2">
    <location>
        <begin position="410"/>
        <end position="437"/>
    </location>
</feature>
<feature type="disulfide bond" evidence="2">
    <location>
        <begin position="412"/>
        <end position="426"/>
    </location>
</feature>
<dbReference type="EMBL" id="DAAA02057732">
    <property type="status" value="NOT_ANNOTATED_CDS"/>
    <property type="molecule type" value="Genomic_DNA"/>
</dbReference>
<dbReference type="RefSeq" id="NP_001180103.1">
    <property type="nucleotide sequence ID" value="NM_001193174.2"/>
</dbReference>
<dbReference type="RefSeq" id="XP_005224821.1">
    <property type="nucleotide sequence ID" value="XM_005224764.3"/>
</dbReference>
<dbReference type="SMR" id="F1MJW3"/>
<dbReference type="FunCoup" id="F1MJW3">
    <property type="interactions" value="58"/>
</dbReference>
<dbReference type="STRING" id="9913.ENSBTAP00000063259"/>
<dbReference type="GlyCosmos" id="F1MJW3">
    <property type="glycosylation" value="2 sites, No reported glycans"/>
</dbReference>
<dbReference type="GlyGen" id="F1MJW3">
    <property type="glycosylation" value="2 sites"/>
</dbReference>
<dbReference type="PaxDb" id="9913-ENSBTAP00000013412"/>
<dbReference type="Ensembl" id="ENSBTAT00000013412.7">
    <property type="protein sequence ID" value="ENSBTAP00000013412.5"/>
    <property type="gene ID" value="ENSBTAG00000010163.7"/>
</dbReference>
<dbReference type="GeneID" id="617802"/>
<dbReference type="KEGG" id="bta:617802"/>
<dbReference type="CTD" id="6340"/>
<dbReference type="VEuPathDB" id="HostDB:ENSBTAG00000010163"/>
<dbReference type="VGNC" id="VGNC:34358">
    <property type="gene designation" value="SCNN1G"/>
</dbReference>
<dbReference type="eggNOG" id="KOG4294">
    <property type="taxonomic scope" value="Eukaryota"/>
</dbReference>
<dbReference type="GeneTree" id="ENSGT00940000160352"/>
<dbReference type="HOGENOM" id="CLU_020415_0_0_1"/>
<dbReference type="InParanoid" id="F1MJW3"/>
<dbReference type="OMA" id="KKYPNWM"/>
<dbReference type="OrthoDB" id="6021021at2759"/>
<dbReference type="TreeFam" id="TF330663"/>
<dbReference type="Reactome" id="R-BTA-2672351">
    <property type="pathway name" value="Stimuli-sensing channels"/>
</dbReference>
<dbReference type="Reactome" id="R-BTA-9730628">
    <property type="pathway name" value="Sensory perception of salty taste"/>
</dbReference>
<dbReference type="Proteomes" id="UP000009136">
    <property type="component" value="Chromosome 25"/>
</dbReference>
<dbReference type="Bgee" id="ENSBTAG00000010163">
    <property type="expression patterns" value="Expressed in adult mammalian kidney and 56 other cell types or tissues"/>
</dbReference>
<dbReference type="GO" id="GO:0016324">
    <property type="term" value="C:apical plasma membrane"/>
    <property type="evidence" value="ECO:0000250"/>
    <property type="project" value="UniProtKB"/>
</dbReference>
<dbReference type="GO" id="GO:0005886">
    <property type="term" value="C:plasma membrane"/>
    <property type="evidence" value="ECO:0000318"/>
    <property type="project" value="GO_Central"/>
</dbReference>
<dbReference type="GO" id="GO:0034706">
    <property type="term" value="C:sodium channel complex"/>
    <property type="evidence" value="ECO:0000318"/>
    <property type="project" value="GO_Central"/>
</dbReference>
<dbReference type="GO" id="GO:0015280">
    <property type="term" value="F:ligand-gated sodium channel activity"/>
    <property type="evidence" value="ECO:0000318"/>
    <property type="project" value="GO_Central"/>
</dbReference>
<dbReference type="GO" id="GO:0035725">
    <property type="term" value="P:sodium ion transmembrane transport"/>
    <property type="evidence" value="ECO:0000250"/>
    <property type="project" value="UniProtKB"/>
</dbReference>
<dbReference type="FunFam" id="1.10.287.770:FF:000005">
    <property type="entry name" value="Amiloride-sensitive sodium channel subunit gamma"/>
    <property type="match status" value="1"/>
</dbReference>
<dbReference type="FunFam" id="2.60.470.10:FF:000005">
    <property type="entry name" value="Amiloride-sensitive sodium channel subunit gamma"/>
    <property type="match status" value="1"/>
</dbReference>
<dbReference type="Gene3D" id="2.60.470.10">
    <property type="entry name" value="Acid-sensing ion channels like domains"/>
    <property type="match status" value="1"/>
</dbReference>
<dbReference type="Gene3D" id="1.10.287.770">
    <property type="entry name" value="YojJ-like"/>
    <property type="match status" value="1"/>
</dbReference>
<dbReference type="InterPro" id="IPR001873">
    <property type="entry name" value="ENaC"/>
</dbReference>
<dbReference type="InterPro" id="IPR004724">
    <property type="entry name" value="ENaC_chordates"/>
</dbReference>
<dbReference type="InterPro" id="IPR020903">
    <property type="entry name" value="ENaC_CS"/>
</dbReference>
<dbReference type="NCBIfam" id="TIGR00859">
    <property type="entry name" value="ENaC"/>
    <property type="match status" value="1"/>
</dbReference>
<dbReference type="PANTHER" id="PTHR11690:SF19">
    <property type="entry name" value="AMILORIDE-SENSITIVE SODIUM CHANNEL SUBUNIT GAMMA"/>
    <property type="match status" value="1"/>
</dbReference>
<dbReference type="PANTHER" id="PTHR11690">
    <property type="entry name" value="AMILORIDE-SENSITIVE SODIUM CHANNEL-RELATED"/>
    <property type="match status" value="1"/>
</dbReference>
<dbReference type="Pfam" id="PF00858">
    <property type="entry name" value="ASC"/>
    <property type="match status" value="1"/>
</dbReference>
<dbReference type="PRINTS" id="PR01078">
    <property type="entry name" value="AMINACHANNEL"/>
</dbReference>
<dbReference type="PROSITE" id="PS01206">
    <property type="entry name" value="ASC"/>
    <property type="match status" value="1"/>
</dbReference>
<protein>
    <recommendedName>
        <fullName evidence="2">Epithelial sodium channel subunit gamma</fullName>
    </recommendedName>
    <alternativeName>
        <fullName evidence="2">Amiloride-sensitive sodium channel subunit gamma</fullName>
    </alternativeName>
</protein>
<accession>F1MJW3</accession>
<evidence type="ECO:0000250" key="1">
    <source>
        <dbReference type="UniProtKB" id="P37091"/>
    </source>
</evidence>
<evidence type="ECO:0000250" key="2">
    <source>
        <dbReference type="UniProtKB" id="P51170"/>
    </source>
</evidence>
<evidence type="ECO:0000250" key="3">
    <source>
        <dbReference type="UniProtKB" id="Q9WU39"/>
    </source>
</evidence>
<evidence type="ECO:0000255" key="4"/>
<evidence type="ECO:0000256" key="5">
    <source>
        <dbReference type="SAM" id="MobiDB-lite"/>
    </source>
</evidence>
<evidence type="ECO:0000305" key="6"/>
<name>SCNNG_BOVIN</name>
<comment type="function">
    <text evidence="2">This is one of the three pore-forming subunits of the heterotrimeric epithelial sodium channel (ENaC), a critical regulator of sodium balance and fluid homeostasis. ENaC operates in epithelial tissues, where it mediates the electrodiffusion of sodium ions from extracellular fluid through the apical membrane of cells, with water following osmotically. It plays a key role in maintaining sodium homeostasis through electrogenic sodium reabsorption in the kidneys. Additionally, ENaC is essential for airway surface liquid homeostasis, which is crucial for proper mucus clearance.</text>
</comment>
<comment type="catalytic activity">
    <reaction evidence="2">
        <text>Na(+)(in) = Na(+)(out)</text>
        <dbReference type="Rhea" id="RHEA:34963"/>
        <dbReference type="ChEBI" id="CHEBI:29101"/>
    </reaction>
</comment>
<comment type="activity regulation">
    <text evidence="2">Originally identified and characterized by its inhibition by the diuretic drug amiloride.</text>
</comment>
<comment type="subunit">
    <text evidence="2">Component of the heterotrimeric epithelial sodium channel (ENaC) composed of an alpha/SCNN1A, a beta/SCNN1B and a gamma/SCNN1G subunit. An additional delta/SCNN1D subunit can replace the alpha/SCNN1A subunit to form an alternative channel with specific properties. Interacts with WWP1 (via WW domains). Interacts with WWP2 (via WW domains); inhibits the channel. Interacts with the full-length immature form of PCSK9 (pro-PCSK9); inhibits ENaC by promoting its proteasomal degradation. Interacts with BPIFA1; the interaction is indirect via SCNN1B and inhibits the proteolytic maturation of SCNN1A and SCNN1G and the activation of ENaC.</text>
</comment>
<comment type="subcellular location">
    <subcellularLocation>
        <location evidence="2">Apical cell membrane</location>
        <topology evidence="2">Multi-pass membrane protein</topology>
    </subcellularLocation>
</comment>
<comment type="PTM">
    <text evidence="1">Phosphorylated on serine and threonine residues. Aldosterone and insulin increase the basal level of phosphorylation.</text>
</comment>
<comment type="PTM">
    <text evidence="2">Ubiquitinated. Can be ubiquitinated at multiple sites and undergo monoubiquitination and polyubiquitination. Ubiquitination by NEDD4 or NEDD4L inhibits the ENaC channel through endocytosis, intracellular retention and degradation of its individual subunits.</text>
</comment>
<comment type="PTM">
    <text evidence="2">ENaC is activated through the proteolytic maturation of its subunits. Furin cleaves the SCNN1G subunit first, followed by cleavage by prostasin (PRSS8), which results in a stepwise increase in the open probability of the channel due to the release of an inhibitory tract. BPIFA1, which is recruited by the SCNN1B subunit, prevents the proteolytic activation of ENaC.</text>
</comment>
<comment type="PTM">
    <text evidence="3">N-glycosylated. N-linked glycans are processed to complex type during ENaC complex assembly and transport to the plasma membrane.</text>
</comment>
<comment type="similarity">
    <text evidence="6">Belongs to the amiloride-sensitive sodium channel (TC 1.A.6) family. SCNN1G subfamily.</text>
</comment>